<evidence type="ECO:0000250" key="1">
    <source>
        <dbReference type="UniProtKB" id="Q03267"/>
    </source>
</evidence>
<evidence type="ECO:0000250" key="2">
    <source>
        <dbReference type="UniProtKB" id="Q13422"/>
    </source>
</evidence>
<evidence type="ECO:0000255" key="3">
    <source>
        <dbReference type="PROSITE-ProRule" id="PRU00042"/>
    </source>
</evidence>
<evidence type="ECO:0000256" key="4">
    <source>
        <dbReference type="SAM" id="MobiDB-lite"/>
    </source>
</evidence>
<evidence type="ECO:0000269" key="5">
    <source>
    </source>
</evidence>
<evidence type="ECO:0000305" key="6"/>
<accession>O42410</accession>
<dbReference type="EMBL" id="Y11833">
    <property type="protein sequence ID" value="CAA72531.1"/>
    <property type="molecule type" value="mRNA"/>
</dbReference>
<dbReference type="RefSeq" id="NP_990419.1">
    <property type="nucleotide sequence ID" value="NM_205088.1"/>
</dbReference>
<dbReference type="SMR" id="O42410"/>
<dbReference type="FunCoup" id="O42410">
    <property type="interactions" value="88"/>
</dbReference>
<dbReference type="STRING" id="9031.ENSGALP00000069359"/>
<dbReference type="PaxDb" id="9031-ENSGALP00000021333"/>
<dbReference type="GeneID" id="395974"/>
<dbReference type="KEGG" id="gga:395974"/>
<dbReference type="CTD" id="10320"/>
<dbReference type="VEuPathDB" id="HostDB:geneid_395974"/>
<dbReference type="eggNOG" id="KOG1721">
    <property type="taxonomic scope" value="Eukaryota"/>
</dbReference>
<dbReference type="InParanoid" id="O42410"/>
<dbReference type="OrthoDB" id="6417347at2759"/>
<dbReference type="PhylomeDB" id="O42410"/>
<dbReference type="PRO" id="PR:O42410"/>
<dbReference type="Proteomes" id="UP000000539">
    <property type="component" value="Unassembled WGS sequence"/>
</dbReference>
<dbReference type="GO" id="GO:0005634">
    <property type="term" value="C:nucleus"/>
    <property type="evidence" value="ECO:0000314"/>
    <property type="project" value="AgBase"/>
</dbReference>
<dbReference type="GO" id="GO:0032993">
    <property type="term" value="C:protein-DNA complex"/>
    <property type="evidence" value="ECO:0000314"/>
    <property type="project" value="AgBase"/>
</dbReference>
<dbReference type="GO" id="GO:0003700">
    <property type="term" value="F:DNA-binding transcription factor activity"/>
    <property type="evidence" value="ECO:0000318"/>
    <property type="project" value="GO_Central"/>
</dbReference>
<dbReference type="GO" id="GO:0000978">
    <property type="term" value="F:RNA polymerase II cis-regulatory region sequence-specific DNA binding"/>
    <property type="evidence" value="ECO:0000318"/>
    <property type="project" value="GO_Central"/>
</dbReference>
<dbReference type="GO" id="GO:0000976">
    <property type="term" value="F:transcription cis-regulatory region binding"/>
    <property type="evidence" value="ECO:0000314"/>
    <property type="project" value="AgBase"/>
</dbReference>
<dbReference type="GO" id="GO:0008270">
    <property type="term" value="F:zinc ion binding"/>
    <property type="evidence" value="ECO:0007669"/>
    <property type="project" value="UniProtKB-KW"/>
</dbReference>
<dbReference type="GO" id="GO:0016049">
    <property type="term" value="P:cell growth"/>
    <property type="evidence" value="ECO:0000304"/>
    <property type="project" value="AgBase"/>
</dbReference>
<dbReference type="GO" id="GO:0002377">
    <property type="term" value="P:immunoglobulin production"/>
    <property type="evidence" value="ECO:0000304"/>
    <property type="project" value="AgBase"/>
</dbReference>
<dbReference type="GO" id="GO:0045892">
    <property type="term" value="P:negative regulation of DNA-templated transcription"/>
    <property type="evidence" value="ECO:0000315"/>
    <property type="project" value="AgBase"/>
</dbReference>
<dbReference type="GO" id="GO:0007204">
    <property type="term" value="P:positive regulation of cytosolic calcium ion concentration"/>
    <property type="evidence" value="ECO:0000315"/>
    <property type="project" value="AgBase"/>
</dbReference>
<dbReference type="GO" id="GO:0006357">
    <property type="term" value="P:regulation of transcription by RNA polymerase II"/>
    <property type="evidence" value="ECO:0000318"/>
    <property type="project" value="GO_Central"/>
</dbReference>
<dbReference type="FunFam" id="3.30.160.60:FF:000073">
    <property type="entry name" value="IKAROS family zinc finger 1"/>
    <property type="match status" value="1"/>
</dbReference>
<dbReference type="FunFam" id="3.30.160.60:FF:000265">
    <property type="entry name" value="IKAROS family zinc finger 1"/>
    <property type="match status" value="1"/>
</dbReference>
<dbReference type="FunFam" id="3.30.160.60:FF:000525">
    <property type="entry name" value="IKAROS family zinc finger 1"/>
    <property type="match status" value="1"/>
</dbReference>
<dbReference type="FunFam" id="3.30.160.60:FF:000080">
    <property type="entry name" value="IKAROS family zinc finger 4"/>
    <property type="match status" value="1"/>
</dbReference>
<dbReference type="FunFam" id="3.30.160.60:FF:000168">
    <property type="entry name" value="zinc finger protein Eos isoform X1"/>
    <property type="match status" value="1"/>
</dbReference>
<dbReference type="Gene3D" id="3.30.160.60">
    <property type="entry name" value="Classic Zinc Finger"/>
    <property type="match status" value="5"/>
</dbReference>
<dbReference type="InterPro" id="IPR050589">
    <property type="entry name" value="Ikaros_C2H2-ZF"/>
</dbReference>
<dbReference type="InterPro" id="IPR036236">
    <property type="entry name" value="Znf_C2H2_sf"/>
</dbReference>
<dbReference type="InterPro" id="IPR013087">
    <property type="entry name" value="Znf_C2H2_type"/>
</dbReference>
<dbReference type="PANTHER" id="PTHR24404:SF36">
    <property type="entry name" value="DNA-BINDING PROTEIN IKAROS"/>
    <property type="match status" value="1"/>
</dbReference>
<dbReference type="PANTHER" id="PTHR24404">
    <property type="entry name" value="ZINC FINGER PROTEIN"/>
    <property type="match status" value="1"/>
</dbReference>
<dbReference type="Pfam" id="PF00096">
    <property type="entry name" value="zf-C2H2"/>
    <property type="match status" value="3"/>
</dbReference>
<dbReference type="SMART" id="SM00355">
    <property type="entry name" value="ZnF_C2H2"/>
    <property type="match status" value="6"/>
</dbReference>
<dbReference type="SUPFAM" id="SSF57667">
    <property type="entry name" value="beta-beta-alpha zinc fingers"/>
    <property type="match status" value="3"/>
</dbReference>
<dbReference type="PROSITE" id="PS00028">
    <property type="entry name" value="ZINC_FINGER_C2H2_1"/>
    <property type="match status" value="5"/>
</dbReference>
<dbReference type="PROSITE" id="PS50157">
    <property type="entry name" value="ZINC_FINGER_C2H2_2"/>
    <property type="match status" value="4"/>
</dbReference>
<gene>
    <name type="primary">IKZF1</name>
    <name type="synonym">IK</name>
    <name type="synonym">IKAROS</name>
    <name type="synonym">ZNFN1A1</name>
</gene>
<keyword id="KW-0010">Activator</keyword>
<keyword id="KW-0025">Alternative splicing</keyword>
<keyword id="KW-0217">Developmental protein</keyword>
<keyword id="KW-0238">DNA-binding</keyword>
<keyword id="KW-0479">Metal-binding</keyword>
<keyword id="KW-0539">Nucleus</keyword>
<keyword id="KW-1185">Reference proteome</keyword>
<keyword id="KW-0677">Repeat</keyword>
<keyword id="KW-0804">Transcription</keyword>
<keyword id="KW-0805">Transcription regulation</keyword>
<keyword id="KW-0862">Zinc</keyword>
<keyword id="KW-0863">Zinc-finger</keyword>
<organism>
    <name type="scientific">Gallus gallus</name>
    <name type="common">Chicken</name>
    <dbReference type="NCBI Taxonomy" id="9031"/>
    <lineage>
        <taxon>Eukaryota</taxon>
        <taxon>Metazoa</taxon>
        <taxon>Chordata</taxon>
        <taxon>Craniata</taxon>
        <taxon>Vertebrata</taxon>
        <taxon>Euteleostomi</taxon>
        <taxon>Archelosauria</taxon>
        <taxon>Archosauria</taxon>
        <taxon>Dinosauria</taxon>
        <taxon>Saurischia</taxon>
        <taxon>Theropoda</taxon>
        <taxon>Coelurosauria</taxon>
        <taxon>Aves</taxon>
        <taxon>Neognathae</taxon>
        <taxon>Galloanserae</taxon>
        <taxon>Galliformes</taxon>
        <taxon>Phasianidae</taxon>
        <taxon>Phasianinae</taxon>
        <taxon>Gallus</taxon>
    </lineage>
</organism>
<proteinExistence type="evidence at transcript level"/>
<name>IKZF1_CHICK</name>
<feature type="chain" id="PRO_0000047096" description="DNA-binding protein Ikaros">
    <location>
        <begin position="1"/>
        <end position="518"/>
    </location>
</feature>
<feature type="zinc finger region" description="C2H2-type 1" evidence="3">
    <location>
        <begin position="117"/>
        <end position="139"/>
    </location>
</feature>
<feature type="zinc finger region" description="C2H2-type 2" evidence="3">
    <location>
        <begin position="145"/>
        <end position="167"/>
    </location>
</feature>
<feature type="zinc finger region" description="C2H2-type 3" evidence="3">
    <location>
        <begin position="173"/>
        <end position="195"/>
    </location>
</feature>
<feature type="zinc finger region" description="C2H2-type 4" evidence="3">
    <location>
        <begin position="201"/>
        <end position="224"/>
    </location>
</feature>
<feature type="zinc finger region" description="C2H2-type 5" evidence="3">
    <location>
        <begin position="461"/>
        <end position="483"/>
    </location>
</feature>
<feature type="zinc finger region" description="C2H2-type 6" evidence="3">
    <location>
        <begin position="489"/>
        <end position="513"/>
    </location>
</feature>
<feature type="region of interest" description="Disordered" evidence="4">
    <location>
        <begin position="1"/>
        <end position="51"/>
    </location>
</feature>
<feature type="region of interest" description="Disordered" evidence="4">
    <location>
        <begin position="381"/>
        <end position="405"/>
    </location>
</feature>
<feature type="compositionally biased region" description="Polar residues" evidence="4">
    <location>
        <begin position="37"/>
        <end position="47"/>
    </location>
</feature>
<reference key="1">
    <citation type="journal article" date="1997" name="Eur. J. Immunol.">
        <title>Avian Ikaros gene is expressed early in embryogenesis.</title>
        <authorList>
            <person name="Liippo J."/>
            <person name="Lassila O."/>
        </authorList>
    </citation>
    <scope>NUCLEOTIDE SEQUENCE [MRNA]</scope>
    <scope>TISSUE SPECIFICITY</scope>
    <scope>DEVELOPMENTAL STAGE</scope>
    <source>
        <strain>H.B2</strain>
        <tissue>Thymus</tissue>
    </source>
</reference>
<comment type="function">
    <text evidence="1 2">Binds and activates the enhancer (delta-A element) of the CD3-delta gene. Functions in the specification and the maturation of the T-lymphocyte. Also interacts with a critical control element in the TDT (terminal deoxynucleotidyltransferase) promoter as well as with the promoters for other genes expressed during early stages of B- and T-cell development. Function is isoform-specific and is modulated by dominant-negative inactive isoforms (By similarity).</text>
</comment>
<comment type="subcellular location">
    <subcellularLocation>
        <location evidence="2">Nucleus</location>
    </subcellularLocation>
</comment>
<comment type="alternative products">
    <event type="alternative splicing"/>
    <isoform>
        <id>O42410-1</id>
        <name>1</name>
        <sequence type="displayed"/>
    </isoform>
    <text>A number of isoforms are produced.</text>
</comment>
<comment type="tissue specificity">
    <text evidence="5">Expressed in embryonic hematopoietic organs such as the bursa of Fabricius, thymus and spleen. In the adult, expressed in spleen, thymus, bursa and peripheral blood leukocytes.</text>
</comment>
<comment type="developmental stage">
    <text evidence="5">Expressed early in embryo from embryonic day 2 onwards.</text>
</comment>
<comment type="similarity">
    <text evidence="6">Belongs to the Ikaros C2H2-type zinc-finger protein family.</text>
</comment>
<sequence>METDEAQDMSQVSGKESPPISDVPDDADEPMPVPEDLSTTTGGQQSVKNERVLAGNIKIETQSDEENGRACEMNGEECAEDLRMLDASGDKMNGSHNGPGSKAMSGVGGIRLPNGKLKCDICGIICIGPNVLMVHNRSHTGERPFQCNQCGASFTQKGNLLRHIKLHSGEKPFKCHLCNYACRRRDALTGHLRTHSVGKPHKCGYCGRSYKQRSSLEEHKERCHNYLQTMSISSNLYSVIKEETNQSEMAEDLCKIGSERSLVLDRLASNVAKRKSSMPQKFVGEKCLSDLPYDATTNYEKENEIMQTHVIDQAINNAISYLGAESLRPLVQTPPVGSEVVPVISPMYQLHKPLGDNQTRSNHTAQDSAVENLLLLSKAKSVSSERDASPSNSCQDSTDTESNNEERSGLIYLTNHIGPHARNGISVKEESRQFDVLRAGTDNSQDAFKVISSNGEQVRVYKCEHCRVLFLDHVMYTIHMGCHGFRDPFECNMCGYHSQDRYEFSSHITRGEHRFHMS</sequence>
<protein>
    <recommendedName>
        <fullName>DNA-binding protein Ikaros</fullName>
    </recommendedName>
    <alternativeName>
        <fullName>Ikaros family zinc finger protein 1</fullName>
    </alternativeName>
</protein>